<sequence length="321" mass="33616">MLPLPLSILLLLTQSQSFLGEEMDVYSEKTLTDPCTLVVCAPPADSLRGHDGRDGKEGPQGEKGDPGPPGMPGPAGREGPSGRQGSMGPPGTPGPKGEPGPEGGVGAPGMPGSPGPAGLKGERGTPGPGGAIGPQGPSGAMGPPGLKGDRGDPGEKGARGETSVLEVDTLRQRMRNLEGEVQRLQNIVTQYRKAVLFPDGQAVGEKIFKTAGAVKSYSDAEQLCREAKGQLASPRSSAENEAVTQLVRAKNKHAYLSMNDISKEGKFTYPTGGSLDYSNWAPGEPNNRAKDEGPENCLEIYSDGNWNDIECREERLVICEF</sequence>
<dbReference type="EMBL" id="AY071821">
    <property type="protein sequence ID" value="AAL61855.1"/>
    <property type="molecule type" value="mRNA"/>
</dbReference>
<dbReference type="EMBL" id="AY071822">
    <property type="protein sequence ID" value="AAL61856.1"/>
    <property type="molecule type" value="Genomic_DNA"/>
</dbReference>
<dbReference type="EMBL" id="BC116147">
    <property type="protein sequence ID" value="AAI16148.1"/>
    <property type="molecule type" value="mRNA"/>
</dbReference>
<dbReference type="EMBL" id="X75912">
    <property type="protein sequence ID" value="CAA53511.1"/>
    <property type="status" value="ALT_SEQ"/>
    <property type="molecule type" value="mRNA"/>
</dbReference>
<dbReference type="PIR" id="A53570">
    <property type="entry name" value="A53570"/>
</dbReference>
<dbReference type="RefSeq" id="NP_001002237.1">
    <property type="nucleotide sequence ID" value="NM_001002237.1"/>
</dbReference>
<dbReference type="SMR" id="P42916"/>
<dbReference type="FunCoup" id="P42916">
    <property type="interactions" value="132"/>
</dbReference>
<dbReference type="PaxDb" id="9913-ENSBTAP00000003773"/>
<dbReference type="GeneID" id="431784"/>
<dbReference type="KEGG" id="bta:431784"/>
<dbReference type="CTD" id="431784"/>
<dbReference type="eggNOG" id="KOG4297">
    <property type="taxonomic scope" value="Eukaryota"/>
</dbReference>
<dbReference type="InParanoid" id="P42916"/>
<dbReference type="OrthoDB" id="10255512at2759"/>
<dbReference type="Proteomes" id="UP000009136">
    <property type="component" value="Unplaced"/>
</dbReference>
<dbReference type="GO" id="GO:0005581">
    <property type="term" value="C:collagen trimer"/>
    <property type="evidence" value="ECO:0007669"/>
    <property type="project" value="UniProtKB-KW"/>
</dbReference>
<dbReference type="GO" id="GO:0005615">
    <property type="term" value="C:extracellular space"/>
    <property type="evidence" value="ECO:0000318"/>
    <property type="project" value="GO_Central"/>
</dbReference>
<dbReference type="GO" id="GO:0005771">
    <property type="term" value="C:multivesicular body"/>
    <property type="evidence" value="ECO:0000318"/>
    <property type="project" value="GO_Central"/>
</dbReference>
<dbReference type="GO" id="GO:0005537">
    <property type="term" value="F:D-mannose binding"/>
    <property type="evidence" value="ECO:0007669"/>
    <property type="project" value="UniProtKB-KW"/>
</dbReference>
<dbReference type="GO" id="GO:0050766">
    <property type="term" value="P:positive regulation of phagocytosis"/>
    <property type="evidence" value="ECO:0000318"/>
    <property type="project" value="GO_Central"/>
</dbReference>
<dbReference type="GO" id="GO:0043129">
    <property type="term" value="P:surfactant homeostasis"/>
    <property type="evidence" value="ECO:0000318"/>
    <property type="project" value="GO_Central"/>
</dbReference>
<dbReference type="FunFam" id="1.20.5.360:FF:000001">
    <property type="entry name" value="Pulmonary surfactant-associated protein D"/>
    <property type="match status" value="1"/>
</dbReference>
<dbReference type="FunFam" id="3.10.100.10:FF:000045">
    <property type="entry name" value="Pulmonary surfactant-associated protein D"/>
    <property type="match status" value="1"/>
</dbReference>
<dbReference type="Gene3D" id="3.10.100.10">
    <property type="entry name" value="Mannose-Binding Protein A, subunit A"/>
    <property type="match status" value="1"/>
</dbReference>
<dbReference type="Gene3D" id="1.20.5.360">
    <property type="entry name" value="SFTPD helical domain"/>
    <property type="match status" value="1"/>
</dbReference>
<dbReference type="InterPro" id="IPR001304">
    <property type="entry name" value="C-type_lectin-like"/>
</dbReference>
<dbReference type="InterPro" id="IPR016186">
    <property type="entry name" value="C-type_lectin-like/link_sf"/>
</dbReference>
<dbReference type="InterPro" id="IPR018378">
    <property type="entry name" value="C-type_lectin_CS"/>
</dbReference>
<dbReference type="InterPro" id="IPR051077">
    <property type="entry name" value="Ca-dependent_lectin"/>
</dbReference>
<dbReference type="InterPro" id="IPR008160">
    <property type="entry name" value="Collagen"/>
</dbReference>
<dbReference type="InterPro" id="IPR016187">
    <property type="entry name" value="CTDL_fold"/>
</dbReference>
<dbReference type="InterPro" id="IPR015097">
    <property type="entry name" value="Surfac_D-trimer"/>
</dbReference>
<dbReference type="PANTHER" id="PTHR24024">
    <property type="entry name" value="PULMONARY SURFACTANT-ASSOCIATED PROTEIN A"/>
    <property type="match status" value="1"/>
</dbReference>
<dbReference type="PANTHER" id="PTHR24024:SF15">
    <property type="entry name" value="PULMONARY SURFACTANT-ASSOCIATED PROTEIN D"/>
    <property type="match status" value="1"/>
</dbReference>
<dbReference type="Pfam" id="PF01391">
    <property type="entry name" value="Collagen"/>
    <property type="match status" value="2"/>
</dbReference>
<dbReference type="Pfam" id="PF00059">
    <property type="entry name" value="Lectin_C"/>
    <property type="match status" value="1"/>
</dbReference>
<dbReference type="Pfam" id="PF09006">
    <property type="entry name" value="Surfac_D-trimer"/>
    <property type="match status" value="1"/>
</dbReference>
<dbReference type="SMART" id="SM00034">
    <property type="entry name" value="CLECT"/>
    <property type="match status" value="1"/>
</dbReference>
<dbReference type="SUPFAM" id="SSF56436">
    <property type="entry name" value="C-type lectin-like"/>
    <property type="match status" value="1"/>
</dbReference>
<dbReference type="SUPFAM" id="SSF57944">
    <property type="entry name" value="Triple coiled coil domain of C-type lectins"/>
    <property type="match status" value="1"/>
</dbReference>
<dbReference type="PROSITE" id="PS00615">
    <property type="entry name" value="C_TYPE_LECTIN_1"/>
    <property type="match status" value="1"/>
</dbReference>
<dbReference type="PROSITE" id="PS50041">
    <property type="entry name" value="C_TYPE_LECTIN_2"/>
    <property type="match status" value="1"/>
</dbReference>
<name>CL43_BOVIN</name>
<reference key="1">
    <citation type="journal article" date="2003" name="Biochim. Biophys. Acta">
        <title>Genomic and molecular characterization of CL-43 and its proximal promoter.</title>
        <authorList>
            <person name="Hansen S."/>
            <person name="Holm D."/>
            <person name="Moeller V."/>
            <person name="Vitved L."/>
            <person name="Bendixen C."/>
            <person name="Skjoedt K."/>
            <person name="Holmskov U."/>
        </authorList>
    </citation>
    <scope>NUCLEOTIDE SEQUENCE [GENOMIC DNA / MRNA]</scope>
    <source>
        <tissue>Liver</tissue>
    </source>
</reference>
<reference key="2">
    <citation type="submission" date="2006-05" db="EMBL/GenBank/DDBJ databases">
        <authorList>
            <consortium name="NIH - Mammalian Gene Collection (MGC) project"/>
        </authorList>
    </citation>
    <scope>NUCLEOTIDE SEQUENCE [LARGE SCALE MRNA]</scope>
    <source>
        <strain>Hereford</strain>
        <tissue>Fetal liver</tissue>
    </source>
</reference>
<reference key="3">
    <citation type="journal article" date="1994" name="J. Biol. Chem.">
        <title>Primary structure of bovine collectin-43 (CL-43). Comparison with conglutinin and lung surfactant protein-D.</title>
        <authorList>
            <person name="Lim B.-L."/>
            <person name="Willis A.C."/>
            <person name="Reid K.B.M."/>
            <person name="Lu J."/>
            <person name="Laursen S.B."/>
            <person name="Jensenius J.C."/>
            <person name="Holmskov U."/>
        </authorList>
    </citation>
    <scope>NUCLEOTIDE SEQUENCE [MRNA] OF 21-321</scope>
    <scope>PARTIAL PROTEIN SEQUENCE</scope>
    <source>
        <tissue>Liver</tissue>
    </source>
</reference>
<accession>P42916</accession>
<accession>Q1LZ84</accession>
<accession>Q8WMF4</accession>
<organism>
    <name type="scientific">Bos taurus</name>
    <name type="common">Bovine</name>
    <dbReference type="NCBI Taxonomy" id="9913"/>
    <lineage>
        <taxon>Eukaryota</taxon>
        <taxon>Metazoa</taxon>
        <taxon>Chordata</taxon>
        <taxon>Craniata</taxon>
        <taxon>Vertebrata</taxon>
        <taxon>Euteleostomi</taxon>
        <taxon>Mammalia</taxon>
        <taxon>Eutheria</taxon>
        <taxon>Laurasiatheria</taxon>
        <taxon>Artiodactyla</taxon>
        <taxon>Ruminantia</taxon>
        <taxon>Pecora</taxon>
        <taxon>Bovidae</taxon>
        <taxon>Bovinae</taxon>
        <taxon>Bos</taxon>
    </lineage>
</organism>
<evidence type="ECO:0000255" key="1">
    <source>
        <dbReference type="PROSITE-ProRule" id="PRU00040"/>
    </source>
</evidence>
<evidence type="ECO:0000256" key="2">
    <source>
        <dbReference type="SAM" id="MobiDB-lite"/>
    </source>
</evidence>
<evidence type="ECO:0000305" key="3"/>
<proteinExistence type="evidence at protein level"/>
<gene>
    <name type="primary">CL43</name>
</gene>
<feature type="signal peptide">
    <location>
        <begin position="1"/>
        <end position="20"/>
    </location>
</feature>
<feature type="chain" id="PRO_0000017371" description="Collectin-43">
    <location>
        <begin position="21"/>
        <end position="321"/>
    </location>
</feature>
<feature type="domain" description="Collagen-like">
    <location>
        <begin position="49"/>
        <end position="162"/>
    </location>
</feature>
<feature type="domain" description="C-type lectin" evidence="1">
    <location>
        <begin position="222"/>
        <end position="321"/>
    </location>
</feature>
<feature type="region of interest" description="Disordered" evidence="2">
    <location>
        <begin position="43"/>
        <end position="163"/>
    </location>
</feature>
<feature type="compositionally biased region" description="Basic and acidic residues" evidence="2">
    <location>
        <begin position="47"/>
        <end position="65"/>
    </location>
</feature>
<feature type="compositionally biased region" description="Gly residues" evidence="2">
    <location>
        <begin position="100"/>
        <end position="109"/>
    </location>
</feature>
<feature type="compositionally biased region" description="Gly residues" evidence="2">
    <location>
        <begin position="124"/>
        <end position="133"/>
    </location>
</feature>
<feature type="compositionally biased region" description="Basic and acidic residues" evidence="2">
    <location>
        <begin position="147"/>
        <end position="159"/>
    </location>
</feature>
<feature type="disulfide bond" evidence="1">
    <location>
        <begin position="224"/>
        <end position="319"/>
    </location>
</feature>
<feature type="disulfide bond" evidence="1">
    <location>
        <begin position="297"/>
        <end position="311"/>
    </location>
</feature>
<feature type="sequence conflict" description="In Ref. 2; AAI16148." evidence="3" ref="2">
    <original>L</original>
    <variation>V</variation>
    <location>
        <position position="37"/>
    </location>
</feature>
<feature type="sequence conflict" description="In Ref. 2; AAI16148." evidence="3" ref="2">
    <original>A</original>
    <variation>T</variation>
    <location>
        <position position="117"/>
    </location>
</feature>
<feature type="sequence conflict" description="In Ref. 3; CAA53511." evidence="3" ref="3">
    <original>T</original>
    <variation>A</variation>
    <location>
        <position position="125"/>
    </location>
</feature>
<feature type="sequence conflict" description="In Ref. 2; AAI16148." evidence="3" ref="2">
    <original>R</original>
    <variation>K</variation>
    <location>
        <position position="159"/>
    </location>
</feature>
<feature type="sequence conflict" description="In Ref. 3; CAA53511." evidence="3" ref="3">
    <original>N</original>
    <variation>G</variation>
    <location>
        <position position="286"/>
    </location>
</feature>
<comment type="function">
    <text>Lectin that binds to various sugars: mannose = ManNAc &gt; fucose &gt; GlcNAc &gt; glucose = maltose &gt; galactose &gt; lactose &gt; GalNAc. Could play a role in immune defense.</text>
</comment>
<comment type="subunit">
    <text>Oligomeric complex of 4 set of homotrimers.</text>
</comment>
<comment type="subcellular location">
    <subcellularLocation>
        <location>Secreted</location>
    </subcellularLocation>
</comment>
<comment type="tissue specificity">
    <text>Liver specific.</text>
</comment>
<comment type="PTM">
    <text evidence="3">Hydroxylated.</text>
</comment>
<comment type="similarity">
    <text evidence="3">Belongs to the SFTPD family.</text>
</comment>
<protein>
    <recommendedName>
        <fullName>Collectin-43</fullName>
        <shortName>CL-43</shortName>
    </recommendedName>
    <alternativeName>
        <fullName>43 kDa collectin</fullName>
    </alternativeName>
</protein>
<keyword id="KW-0106">Calcium</keyword>
<keyword id="KW-0176">Collagen</keyword>
<keyword id="KW-0903">Direct protein sequencing</keyword>
<keyword id="KW-1015">Disulfide bond</keyword>
<keyword id="KW-0379">Hydroxylation</keyword>
<keyword id="KW-0430">Lectin</keyword>
<keyword id="KW-0465">Mannose-binding</keyword>
<keyword id="KW-1185">Reference proteome</keyword>
<keyword id="KW-0677">Repeat</keyword>
<keyword id="KW-0964">Secreted</keyword>
<keyword id="KW-0732">Signal</keyword>